<name>RFC2_PHANO</name>
<proteinExistence type="inferred from homology"/>
<comment type="function">
    <text evidence="1">The elongation of primed DNA templates by DNA polymerase delta and epsilon requires the action of the accessory proteins proliferating cell nuclear antigen (PCNA) and activator 1. Subunit 2 binds ATP and single-stranded DNA (By similarity).</text>
</comment>
<comment type="subunit">
    <text evidence="1">Heteropentamer of subunits RFC1, RFC2, RFC3, RFC4 and RFC5 that forms a complex with PCNA in the presence of ATP.</text>
</comment>
<comment type="subcellular location">
    <subcellularLocation>
        <location evidence="1">Nucleus</location>
    </subcellularLocation>
</comment>
<comment type="similarity">
    <text evidence="3">Belongs to the activator 1 small subunits family.</text>
</comment>
<comment type="sequence caution" evidence="3">
    <conflict type="erroneous gene model prediction">
        <sequence resource="EMBL-CDS" id="EAT88110"/>
    </conflict>
</comment>
<sequence length="411" mass="45519">MADFFNLKARQQAAAQASSSKTPTSKQESNRLQPWVEKYRPKTLSEVTAQDNTIQILSRTLQSSNLPHMLFYGPPGTGKTSTILALAKQLYGPELMKSRVLELNASDERGISIVRQKVKDFARQQLSVAPTYNVMTEDKDGGEAKMVRYRDKYSCPPFKIIVLDEADSMTQDAQSALRRTMETYSRMTRFCLVCNYVTRIIDPLASRCSKFRFKSLDQGNAVRRVDDIAKLEDVKLDAGVSEELVRVADGDLRKAITFLQSAARLVGATQTAGRKKKVVVDDEDEMDIDPPSAPSKTTISLEQIAEIAGVIPAPTLASFSDALFPKSAAKSIRYNEIAKVVENMIAEGWSASQTVSQLYEQVMFDERVEDIKKVRLAGVFSETDKRLVDGGDEHLAVLDLGVRVAGVLCMG</sequence>
<accession>P0C7N7</accession>
<accession>Q0UV64</accession>
<dbReference type="EMBL" id="CH445330">
    <property type="protein sequence ID" value="EAT88110.2"/>
    <property type="status" value="ALT_SEQ"/>
    <property type="molecule type" value="Genomic_DNA"/>
</dbReference>
<dbReference type="RefSeq" id="XP_001794769.1">
    <property type="nucleotide sequence ID" value="XM_001794717.1"/>
</dbReference>
<dbReference type="SMR" id="P0C7N7"/>
<dbReference type="FunCoup" id="P0C7N7">
    <property type="interactions" value="589"/>
</dbReference>
<dbReference type="STRING" id="321614.P0C7N7"/>
<dbReference type="GeneID" id="5971637"/>
<dbReference type="KEGG" id="pno:SNOG_04350"/>
<dbReference type="VEuPathDB" id="FungiDB:JI435_303150"/>
<dbReference type="InParanoid" id="P0C7N7"/>
<dbReference type="OMA" id="GCQSGSF"/>
<dbReference type="OrthoDB" id="4199794at2759"/>
<dbReference type="Proteomes" id="UP000001055">
    <property type="component" value="Unassembled WGS sequence"/>
</dbReference>
<dbReference type="GO" id="GO:0005663">
    <property type="term" value="C:DNA replication factor C complex"/>
    <property type="evidence" value="ECO:0000318"/>
    <property type="project" value="GO_Central"/>
</dbReference>
<dbReference type="GO" id="GO:0031391">
    <property type="term" value="C:Elg1 RFC-like complex"/>
    <property type="evidence" value="ECO:0007669"/>
    <property type="project" value="UniProtKB-ARBA"/>
</dbReference>
<dbReference type="GO" id="GO:0005634">
    <property type="term" value="C:nucleus"/>
    <property type="evidence" value="ECO:0000318"/>
    <property type="project" value="GO_Central"/>
</dbReference>
<dbReference type="GO" id="GO:0005524">
    <property type="term" value="F:ATP binding"/>
    <property type="evidence" value="ECO:0007669"/>
    <property type="project" value="UniProtKB-KW"/>
</dbReference>
<dbReference type="GO" id="GO:0016887">
    <property type="term" value="F:ATP hydrolysis activity"/>
    <property type="evidence" value="ECO:0007669"/>
    <property type="project" value="InterPro"/>
</dbReference>
<dbReference type="GO" id="GO:0003677">
    <property type="term" value="F:DNA binding"/>
    <property type="evidence" value="ECO:0007669"/>
    <property type="project" value="InterPro"/>
</dbReference>
<dbReference type="GO" id="GO:0006281">
    <property type="term" value="P:DNA repair"/>
    <property type="evidence" value="ECO:0000318"/>
    <property type="project" value="GO_Central"/>
</dbReference>
<dbReference type="GO" id="GO:0006271">
    <property type="term" value="P:DNA strand elongation involved in DNA replication"/>
    <property type="evidence" value="ECO:0007669"/>
    <property type="project" value="UniProtKB-ARBA"/>
</dbReference>
<dbReference type="GO" id="GO:0006261">
    <property type="term" value="P:DNA-templated DNA replication"/>
    <property type="evidence" value="ECO:0000318"/>
    <property type="project" value="GO_Central"/>
</dbReference>
<dbReference type="CDD" id="cd00009">
    <property type="entry name" value="AAA"/>
    <property type="match status" value="1"/>
</dbReference>
<dbReference type="CDD" id="cd18140">
    <property type="entry name" value="HLD_clamp_RFC"/>
    <property type="match status" value="1"/>
</dbReference>
<dbReference type="FunFam" id="1.20.272.10:FF:000011">
    <property type="entry name" value="Replication factor C subunit 2"/>
    <property type="match status" value="1"/>
</dbReference>
<dbReference type="FunFam" id="3.40.50.300:FF:000237">
    <property type="entry name" value="replication factor C subunit 4"/>
    <property type="match status" value="1"/>
</dbReference>
<dbReference type="Gene3D" id="1.10.8.60">
    <property type="match status" value="1"/>
</dbReference>
<dbReference type="Gene3D" id="1.20.272.10">
    <property type="match status" value="1"/>
</dbReference>
<dbReference type="Gene3D" id="3.40.50.300">
    <property type="entry name" value="P-loop containing nucleotide triphosphate hydrolases"/>
    <property type="match status" value="1"/>
</dbReference>
<dbReference type="InterPro" id="IPR003593">
    <property type="entry name" value="AAA+_ATPase"/>
</dbReference>
<dbReference type="InterPro" id="IPR003959">
    <property type="entry name" value="ATPase_AAA_core"/>
</dbReference>
<dbReference type="InterPro" id="IPR008921">
    <property type="entry name" value="DNA_pol3_clamp-load_cplx_C"/>
</dbReference>
<dbReference type="InterPro" id="IPR050238">
    <property type="entry name" value="DNA_Rep/Repair_Clamp_Loader"/>
</dbReference>
<dbReference type="InterPro" id="IPR027417">
    <property type="entry name" value="P-loop_NTPase"/>
</dbReference>
<dbReference type="InterPro" id="IPR013748">
    <property type="entry name" value="Rep_factorC_C"/>
</dbReference>
<dbReference type="InterPro" id="IPR047854">
    <property type="entry name" value="RFC_lid"/>
</dbReference>
<dbReference type="PANTHER" id="PTHR11669">
    <property type="entry name" value="REPLICATION FACTOR C / DNA POLYMERASE III GAMMA-TAU SUBUNIT"/>
    <property type="match status" value="1"/>
</dbReference>
<dbReference type="PANTHER" id="PTHR11669:SF20">
    <property type="entry name" value="REPLICATION FACTOR C SUBUNIT 4"/>
    <property type="match status" value="1"/>
</dbReference>
<dbReference type="Pfam" id="PF00004">
    <property type="entry name" value="AAA"/>
    <property type="match status" value="1"/>
</dbReference>
<dbReference type="Pfam" id="PF21960">
    <property type="entry name" value="RCF1-5-like_lid"/>
    <property type="match status" value="1"/>
</dbReference>
<dbReference type="Pfam" id="PF08542">
    <property type="entry name" value="Rep_fac_C"/>
    <property type="match status" value="1"/>
</dbReference>
<dbReference type="SMART" id="SM00382">
    <property type="entry name" value="AAA"/>
    <property type="match status" value="1"/>
</dbReference>
<dbReference type="SUPFAM" id="SSF52540">
    <property type="entry name" value="P-loop containing nucleoside triphosphate hydrolases"/>
    <property type="match status" value="1"/>
</dbReference>
<dbReference type="SUPFAM" id="SSF48019">
    <property type="entry name" value="post-AAA+ oligomerization domain-like"/>
    <property type="match status" value="1"/>
</dbReference>
<feature type="chain" id="PRO_0000341281" description="Replication factor C subunit 2">
    <location>
        <begin position="1"/>
        <end position="411"/>
    </location>
</feature>
<feature type="region of interest" description="Disordered" evidence="2">
    <location>
        <begin position="1"/>
        <end position="36"/>
    </location>
</feature>
<feature type="compositionally biased region" description="Low complexity" evidence="2">
    <location>
        <begin position="11"/>
        <end position="27"/>
    </location>
</feature>
<feature type="binding site" evidence="1">
    <location>
        <position position="36"/>
    </location>
    <ligand>
        <name>ATP</name>
        <dbReference type="ChEBI" id="CHEBI:30616"/>
    </ligand>
</feature>
<feature type="binding site" evidence="1">
    <location>
        <position position="40"/>
    </location>
    <ligand>
        <name>ATP</name>
        <dbReference type="ChEBI" id="CHEBI:30616"/>
    </ligand>
</feature>
<feature type="binding site" evidence="1">
    <location>
        <begin position="73"/>
        <end position="81"/>
    </location>
    <ligand>
        <name>ATP</name>
        <dbReference type="ChEBI" id="CHEBI:30616"/>
    </ligand>
</feature>
<feature type="binding site" evidence="1">
    <location>
        <position position="195"/>
    </location>
    <ligand>
        <name>ATP</name>
        <dbReference type="ChEBI" id="CHEBI:30616"/>
    </ligand>
</feature>
<feature type="binding site" evidence="1">
    <location>
        <position position="253"/>
    </location>
    <ligand>
        <name>ATP</name>
        <dbReference type="ChEBI" id="CHEBI:30616"/>
    </ligand>
</feature>
<organism>
    <name type="scientific">Phaeosphaeria nodorum (strain SN15 / ATCC MYA-4574 / FGSC 10173)</name>
    <name type="common">Glume blotch fungus</name>
    <name type="synonym">Parastagonospora nodorum</name>
    <dbReference type="NCBI Taxonomy" id="321614"/>
    <lineage>
        <taxon>Eukaryota</taxon>
        <taxon>Fungi</taxon>
        <taxon>Dikarya</taxon>
        <taxon>Ascomycota</taxon>
        <taxon>Pezizomycotina</taxon>
        <taxon>Dothideomycetes</taxon>
        <taxon>Pleosporomycetidae</taxon>
        <taxon>Pleosporales</taxon>
        <taxon>Pleosporineae</taxon>
        <taxon>Phaeosphaeriaceae</taxon>
        <taxon>Parastagonospora</taxon>
    </lineage>
</organism>
<evidence type="ECO:0000250" key="1"/>
<evidence type="ECO:0000256" key="2">
    <source>
        <dbReference type="SAM" id="MobiDB-lite"/>
    </source>
</evidence>
<evidence type="ECO:0000305" key="3"/>
<keyword id="KW-0067">ATP-binding</keyword>
<keyword id="KW-0235">DNA replication</keyword>
<keyword id="KW-0547">Nucleotide-binding</keyword>
<keyword id="KW-0539">Nucleus</keyword>
<reference key="1">
    <citation type="journal article" date="2007" name="Plant Cell">
        <title>Dothideomycete-plant interactions illuminated by genome sequencing and EST analysis of the wheat pathogen Stagonospora nodorum.</title>
        <authorList>
            <person name="Hane J.K."/>
            <person name="Lowe R.G.T."/>
            <person name="Solomon P.S."/>
            <person name="Tan K.-C."/>
            <person name="Schoch C.L."/>
            <person name="Spatafora J.W."/>
            <person name="Crous P.W."/>
            <person name="Kodira C.D."/>
            <person name="Birren B.W."/>
            <person name="Galagan J.E."/>
            <person name="Torriani S.F.F."/>
            <person name="McDonald B.A."/>
            <person name="Oliver R.P."/>
        </authorList>
    </citation>
    <scope>NUCLEOTIDE SEQUENCE [LARGE SCALE GENOMIC DNA]</scope>
    <source>
        <strain>SN15 / ATCC MYA-4574 / FGSC 10173</strain>
    </source>
</reference>
<protein>
    <recommendedName>
        <fullName>Replication factor C subunit 2</fullName>
        <shortName>Replication factor C2</shortName>
    </recommendedName>
</protein>
<gene>
    <name type="primary">RFC2</name>
    <name type="ORF">SNOG_04350</name>
</gene>